<evidence type="ECO:0000305" key="1"/>
<sequence>MSKRGRGGASGAKFRISLGLPVGAVMNCADNTGAKNLFVISVYGIRGRLNRLPSAGVGDMFVCSVKKGKPELRKKVLQGVVIRQRKQFRRKDGTFIYFEDNAGVIVNNKGEMKGSAITGPVAKECADLWPRIAANAGSIA</sequence>
<comment type="similarity">
    <text evidence="1">Belongs to the universal ribosomal protein uL14 family.</text>
</comment>
<accession>P48158</accession>
<dbReference type="EMBL" id="FO080138">
    <property type="protein sequence ID" value="CCD61530.1"/>
    <property type="molecule type" value="Genomic_DNA"/>
</dbReference>
<dbReference type="PIR" id="T15337">
    <property type="entry name" value="T15337"/>
</dbReference>
<dbReference type="RefSeq" id="NP_498231.1">
    <property type="nucleotide sequence ID" value="NM_065830.8"/>
</dbReference>
<dbReference type="PDB" id="9BH5">
    <property type="method" value="EM"/>
    <property type="resolution" value="2.63 A"/>
    <property type="chains" value="CV=1-140"/>
</dbReference>
<dbReference type="PDB" id="9CAI">
    <property type="method" value="EM"/>
    <property type="resolution" value="2.59 A"/>
    <property type="chains" value="CV=1-140"/>
</dbReference>
<dbReference type="PDBsum" id="9BH5"/>
<dbReference type="PDBsum" id="9CAI"/>
<dbReference type="EMDB" id="EMD-44533"/>
<dbReference type="EMDB" id="EMD-45392"/>
<dbReference type="SMR" id="P48158"/>
<dbReference type="BioGRID" id="41023">
    <property type="interactions" value="100"/>
</dbReference>
<dbReference type="DIP" id="DIP-27299N"/>
<dbReference type="FunCoup" id="P48158">
    <property type="interactions" value="2250"/>
</dbReference>
<dbReference type="IntAct" id="P48158">
    <property type="interactions" value="3"/>
</dbReference>
<dbReference type="MINT" id="P48158"/>
<dbReference type="STRING" id="6239.B0336.10.3"/>
<dbReference type="PaxDb" id="6239-B0336.10.3"/>
<dbReference type="PeptideAtlas" id="P48158"/>
<dbReference type="EnsemblMetazoa" id="B0336.10.1">
    <property type="protein sequence ID" value="B0336.10.1"/>
    <property type="gene ID" value="WBGene00004435"/>
</dbReference>
<dbReference type="EnsemblMetazoa" id="B0336.10.2">
    <property type="protein sequence ID" value="B0336.10.2"/>
    <property type="gene ID" value="WBGene00004435"/>
</dbReference>
<dbReference type="GeneID" id="175796"/>
<dbReference type="KEGG" id="cel:CELE_B0336.10"/>
<dbReference type="UCSC" id="B0336.10.2">
    <property type="organism name" value="c. elegans"/>
</dbReference>
<dbReference type="AGR" id="WB:WBGene00004435"/>
<dbReference type="CTD" id="175796"/>
<dbReference type="WormBase" id="B0336.10">
    <property type="protein sequence ID" value="CE00778"/>
    <property type="gene ID" value="WBGene00004435"/>
    <property type="gene designation" value="rpl-23"/>
</dbReference>
<dbReference type="eggNOG" id="KOG0901">
    <property type="taxonomic scope" value="Eukaryota"/>
</dbReference>
<dbReference type="GeneTree" id="ENSGT00390000004690"/>
<dbReference type="HOGENOM" id="CLU_095071_3_0_1"/>
<dbReference type="InParanoid" id="P48158"/>
<dbReference type="OMA" id="MIQMQTR"/>
<dbReference type="OrthoDB" id="407959at2759"/>
<dbReference type="PhylomeDB" id="P48158"/>
<dbReference type="Reactome" id="R-CEL-156827">
    <property type="pathway name" value="L13a-mediated translational silencing of Ceruloplasmin expression"/>
</dbReference>
<dbReference type="Reactome" id="R-CEL-1799339">
    <property type="pathway name" value="SRP-dependent cotranslational protein targeting to membrane"/>
</dbReference>
<dbReference type="Reactome" id="R-CEL-72689">
    <property type="pathway name" value="Formation of a pool of free 40S subunits"/>
</dbReference>
<dbReference type="Reactome" id="R-CEL-72706">
    <property type="pathway name" value="GTP hydrolysis and joining of the 60S ribosomal subunit"/>
</dbReference>
<dbReference type="Reactome" id="R-CEL-975956">
    <property type="pathway name" value="Nonsense Mediated Decay (NMD) independent of the Exon Junction Complex (EJC)"/>
</dbReference>
<dbReference type="Reactome" id="R-CEL-975957">
    <property type="pathway name" value="Nonsense Mediated Decay (NMD) enhanced by the Exon Junction Complex (EJC)"/>
</dbReference>
<dbReference type="PRO" id="PR:P48158"/>
<dbReference type="Proteomes" id="UP000001940">
    <property type="component" value="Chromosome III"/>
</dbReference>
<dbReference type="Bgee" id="WBGene00004435">
    <property type="expression patterns" value="Expressed in pharyngeal muscle cell (C elegans) and 3 other cell types or tissues"/>
</dbReference>
<dbReference type="GO" id="GO:0022625">
    <property type="term" value="C:cytosolic large ribosomal subunit"/>
    <property type="evidence" value="ECO:0000318"/>
    <property type="project" value="GO_Central"/>
</dbReference>
<dbReference type="GO" id="GO:0070180">
    <property type="term" value="F:large ribosomal subunit rRNA binding"/>
    <property type="evidence" value="ECO:0000318"/>
    <property type="project" value="GO_Central"/>
</dbReference>
<dbReference type="GO" id="GO:0003735">
    <property type="term" value="F:structural constituent of ribosome"/>
    <property type="evidence" value="ECO:0000318"/>
    <property type="project" value="GO_Central"/>
</dbReference>
<dbReference type="GO" id="GO:0006412">
    <property type="term" value="P:translation"/>
    <property type="evidence" value="ECO:0007669"/>
    <property type="project" value="InterPro"/>
</dbReference>
<dbReference type="CDD" id="cd00337">
    <property type="entry name" value="Ribosomal_uL14"/>
    <property type="match status" value="1"/>
</dbReference>
<dbReference type="FunFam" id="2.40.150.20:FF:000003">
    <property type="entry name" value="60S ribosomal protein L23"/>
    <property type="match status" value="1"/>
</dbReference>
<dbReference type="Gene3D" id="2.40.150.20">
    <property type="entry name" value="Ribosomal protein L14"/>
    <property type="match status" value="1"/>
</dbReference>
<dbReference type="HAMAP" id="MF_01367">
    <property type="entry name" value="Ribosomal_uL14"/>
    <property type="match status" value="1"/>
</dbReference>
<dbReference type="InterPro" id="IPR000218">
    <property type="entry name" value="Ribosomal_uL14"/>
</dbReference>
<dbReference type="InterPro" id="IPR019972">
    <property type="entry name" value="Ribosomal_uL14_CS"/>
</dbReference>
<dbReference type="InterPro" id="IPR036853">
    <property type="entry name" value="Ribosomal_uL14_sf"/>
</dbReference>
<dbReference type="NCBIfam" id="NF006344">
    <property type="entry name" value="PRK08571.1"/>
    <property type="match status" value="1"/>
</dbReference>
<dbReference type="PANTHER" id="PTHR11761">
    <property type="entry name" value="50S/60S RIBOSOMAL PROTEIN L14/L23"/>
    <property type="match status" value="1"/>
</dbReference>
<dbReference type="PANTHER" id="PTHR11761:SF8">
    <property type="entry name" value="LARGE RIBOSOMAL SUBUNIT PROTEIN UL14"/>
    <property type="match status" value="1"/>
</dbReference>
<dbReference type="Pfam" id="PF00238">
    <property type="entry name" value="Ribosomal_L14"/>
    <property type="match status" value="1"/>
</dbReference>
<dbReference type="SMART" id="SM01374">
    <property type="entry name" value="Ribosomal_L14"/>
    <property type="match status" value="1"/>
</dbReference>
<dbReference type="SUPFAM" id="SSF50193">
    <property type="entry name" value="Ribosomal protein L14"/>
    <property type="match status" value="1"/>
</dbReference>
<dbReference type="PROSITE" id="PS00049">
    <property type="entry name" value="RIBOSOMAL_L14"/>
    <property type="match status" value="1"/>
</dbReference>
<keyword id="KW-0002">3D-structure</keyword>
<keyword id="KW-1185">Reference proteome</keyword>
<keyword id="KW-0687">Ribonucleoprotein</keyword>
<keyword id="KW-0689">Ribosomal protein</keyword>
<gene>
    <name type="primary">rpl-23</name>
    <name type="ORF">B0336.10</name>
</gene>
<feature type="chain" id="PRO_0000128620" description="Large ribosomal subunit protein uL14">
    <location>
        <begin position="1"/>
        <end position="140"/>
    </location>
</feature>
<name>RL23_CAEEL</name>
<organism>
    <name type="scientific">Caenorhabditis elegans</name>
    <dbReference type="NCBI Taxonomy" id="6239"/>
    <lineage>
        <taxon>Eukaryota</taxon>
        <taxon>Metazoa</taxon>
        <taxon>Ecdysozoa</taxon>
        <taxon>Nematoda</taxon>
        <taxon>Chromadorea</taxon>
        <taxon>Rhabditida</taxon>
        <taxon>Rhabditina</taxon>
        <taxon>Rhabditomorpha</taxon>
        <taxon>Rhabditoidea</taxon>
        <taxon>Rhabditidae</taxon>
        <taxon>Peloderinae</taxon>
        <taxon>Caenorhabditis</taxon>
    </lineage>
</organism>
<reference key="1">
    <citation type="journal article" date="1998" name="Science">
        <title>Genome sequence of the nematode C. elegans: a platform for investigating biology.</title>
        <authorList>
            <consortium name="The C. elegans sequencing consortium"/>
        </authorList>
    </citation>
    <scope>NUCLEOTIDE SEQUENCE [LARGE SCALE GENOMIC DNA]</scope>
    <source>
        <strain>Bristol N2</strain>
    </source>
</reference>
<protein>
    <recommendedName>
        <fullName evidence="1">Large ribosomal subunit protein uL14</fullName>
    </recommendedName>
    <alternativeName>
        <fullName>60S ribosomal protein L23</fullName>
    </alternativeName>
</protein>
<proteinExistence type="evidence at protein level"/>